<accession>O42237</accession>
<accession>Q90666</accession>
<feature type="signal peptide" evidence="2">
    <location>
        <begin position="1"/>
        <end position="25"/>
    </location>
</feature>
<feature type="chain" id="PRO_0000032319" description="Semaphorin-3E">
    <location>
        <begin position="26"/>
        <end position="785"/>
    </location>
</feature>
<feature type="domain" description="Sema" evidence="3">
    <location>
        <begin position="36"/>
        <end position="520"/>
    </location>
</feature>
<feature type="domain" description="Ig-like C2-type">
    <location>
        <begin position="651"/>
        <end position="740"/>
    </location>
</feature>
<feature type="region of interest" description="Disordered" evidence="4">
    <location>
        <begin position="744"/>
        <end position="785"/>
    </location>
</feature>
<feature type="compositionally biased region" description="Basic and acidic residues" evidence="4">
    <location>
        <begin position="759"/>
        <end position="777"/>
    </location>
</feature>
<feature type="glycosylation site" description="N-linked (GlcNAc...) asparagine" evidence="2">
    <location>
        <position position="48"/>
    </location>
</feature>
<feature type="glycosylation site" description="N-linked (GlcNAc...) asparagine" evidence="2">
    <location>
        <position position="130"/>
    </location>
</feature>
<feature type="glycosylation site" description="N-linked (GlcNAc...) asparagine" evidence="2">
    <location>
        <position position="600"/>
    </location>
</feature>
<feature type="disulfide bond" evidence="3">
    <location>
        <begin position="109"/>
        <end position="119"/>
    </location>
</feature>
<feature type="disulfide bond" evidence="3">
    <location>
        <begin position="137"/>
        <end position="146"/>
    </location>
</feature>
<feature type="disulfide bond" evidence="3">
    <location>
        <begin position="274"/>
        <end position="386"/>
    </location>
</feature>
<feature type="disulfide bond" evidence="3">
    <location>
        <begin position="298"/>
        <end position="346"/>
    </location>
</feature>
<feature type="disulfide bond" evidence="3">
    <location>
        <begin position="523"/>
        <end position="541"/>
    </location>
</feature>
<feature type="disulfide bond" evidence="3">
    <location>
        <begin position="658"/>
        <end position="733"/>
    </location>
</feature>
<feature type="sequence conflict" description="In Ref. 2." evidence="5" ref="2">
    <original>N</original>
    <variation>D</variation>
    <location>
        <position position="246"/>
    </location>
</feature>
<feature type="sequence conflict" description="In Ref. 2." evidence="5" ref="2">
    <original>V</original>
    <variation>I</variation>
    <location>
        <position position="248"/>
    </location>
</feature>
<feature type="sequence conflict" description="In Ref. 2." evidence="5" ref="2">
    <original>L</original>
    <variation>F</variation>
    <location>
        <position position="250"/>
    </location>
</feature>
<protein>
    <recommendedName>
        <fullName>Semaphorin-3E</fullName>
    </recommendedName>
    <alternativeName>
        <fullName>Collapsin-5</fullName>
        <shortName>COLL-5</shortName>
    </alternativeName>
</protein>
<reference key="1">
    <citation type="journal article" date="1997" name="Neuron">
        <title>Secreted chick semaphorins bind recombinant neuropilin with similar affinities but bind different subsets of neurons in situ.</title>
        <authorList>
            <person name="Feiner L."/>
            <person name="Koppel A.M."/>
            <person name="Kobayashi H."/>
            <person name="Raper J.A."/>
        </authorList>
    </citation>
    <scope>NUCLEOTIDE SEQUENCE [MRNA]</scope>
    <source>
        <tissue>Fetal brain</tissue>
    </source>
</reference>
<reference key="2">
    <citation type="journal article" date="1995" name="Neuron">
        <title>A family of molecules related to collapsin in the embryonic chick nervous system.</title>
        <authorList>
            <person name="Luo Y."/>
            <person name="Shepherd I."/>
            <person name="Li J."/>
            <person name="Renzi M.J."/>
            <person name="Chang S."/>
            <person name="Raper J.A."/>
        </authorList>
    </citation>
    <scope>NUCLEOTIDE SEQUENCE [MRNA] OF 244-543</scope>
</reference>
<dbReference type="EMBL" id="AF022947">
    <property type="protein sequence ID" value="AAB80952.1"/>
    <property type="molecule type" value="mRNA"/>
</dbReference>
<dbReference type="EMBL" id="U28243">
    <property type="protein sequence ID" value="AAA86899.1"/>
    <property type="molecule type" value="mRNA"/>
</dbReference>
<dbReference type="RefSeq" id="NP_989573.1">
    <property type="nucleotide sequence ID" value="NM_204242.1"/>
</dbReference>
<dbReference type="SMR" id="O42237"/>
<dbReference type="FunCoup" id="O42237">
    <property type="interactions" value="26"/>
</dbReference>
<dbReference type="STRING" id="9031.ENSGALP00000051150"/>
<dbReference type="GlyCosmos" id="O42237">
    <property type="glycosylation" value="3 sites, No reported glycans"/>
</dbReference>
<dbReference type="GlyGen" id="O42237">
    <property type="glycosylation" value="3 sites"/>
</dbReference>
<dbReference type="PaxDb" id="9031-ENSGALP00000013846"/>
<dbReference type="GeneID" id="374089"/>
<dbReference type="KEGG" id="gga:374089"/>
<dbReference type="CTD" id="9723"/>
<dbReference type="VEuPathDB" id="HostDB:geneid_374089"/>
<dbReference type="eggNOG" id="KOG3611">
    <property type="taxonomic scope" value="Eukaryota"/>
</dbReference>
<dbReference type="InParanoid" id="O42237"/>
<dbReference type="OrthoDB" id="9988752at2759"/>
<dbReference type="PhylomeDB" id="O42237"/>
<dbReference type="PRO" id="PR:O42237"/>
<dbReference type="Proteomes" id="UP000000539">
    <property type="component" value="Unassembled WGS sequence"/>
</dbReference>
<dbReference type="GO" id="GO:0005615">
    <property type="term" value="C:extracellular space"/>
    <property type="evidence" value="ECO:0000314"/>
    <property type="project" value="AgBase"/>
</dbReference>
<dbReference type="GO" id="GO:0005886">
    <property type="term" value="C:plasma membrane"/>
    <property type="evidence" value="ECO:0000318"/>
    <property type="project" value="GO_Central"/>
</dbReference>
<dbReference type="GO" id="GO:0045499">
    <property type="term" value="F:chemorepellent activity"/>
    <property type="evidence" value="ECO:0000318"/>
    <property type="project" value="GO_Central"/>
</dbReference>
<dbReference type="GO" id="GO:0038191">
    <property type="term" value="F:neuropilin binding"/>
    <property type="evidence" value="ECO:0000353"/>
    <property type="project" value="AgBase"/>
</dbReference>
<dbReference type="GO" id="GO:0030215">
    <property type="term" value="F:semaphorin receptor binding"/>
    <property type="evidence" value="ECO:0000318"/>
    <property type="project" value="GO_Central"/>
</dbReference>
<dbReference type="GO" id="GO:0001525">
    <property type="term" value="P:angiogenesis"/>
    <property type="evidence" value="ECO:0007669"/>
    <property type="project" value="UniProtKB-KW"/>
</dbReference>
<dbReference type="GO" id="GO:0007411">
    <property type="term" value="P:axon guidance"/>
    <property type="evidence" value="ECO:0000318"/>
    <property type="project" value="GO_Central"/>
</dbReference>
<dbReference type="GO" id="GO:0050919">
    <property type="term" value="P:negative chemotaxis"/>
    <property type="evidence" value="ECO:0000318"/>
    <property type="project" value="GO_Central"/>
</dbReference>
<dbReference type="GO" id="GO:0001755">
    <property type="term" value="P:neural crest cell migration"/>
    <property type="evidence" value="ECO:0000318"/>
    <property type="project" value="GO_Central"/>
</dbReference>
<dbReference type="GO" id="GO:0030335">
    <property type="term" value="P:positive regulation of cell migration"/>
    <property type="evidence" value="ECO:0000318"/>
    <property type="project" value="GO_Central"/>
</dbReference>
<dbReference type="GO" id="GO:0071526">
    <property type="term" value="P:semaphorin-plexin signaling pathway"/>
    <property type="evidence" value="ECO:0000318"/>
    <property type="project" value="GO_Central"/>
</dbReference>
<dbReference type="CDD" id="cd05871">
    <property type="entry name" value="Ig_Sema3"/>
    <property type="match status" value="1"/>
</dbReference>
<dbReference type="CDD" id="cd11253">
    <property type="entry name" value="Sema_3E"/>
    <property type="match status" value="1"/>
</dbReference>
<dbReference type="FunFam" id="2.130.10.10:FF:000015">
    <property type="entry name" value="Semaphorin 3B"/>
    <property type="match status" value="1"/>
</dbReference>
<dbReference type="FunFam" id="2.60.40.10:FF:000030">
    <property type="entry name" value="Semaphorin 3F like"/>
    <property type="match status" value="1"/>
</dbReference>
<dbReference type="FunFam" id="3.30.1680.10:FF:000001">
    <property type="entry name" value="Semaphorin 3F like"/>
    <property type="match status" value="1"/>
</dbReference>
<dbReference type="Gene3D" id="3.30.1680.10">
    <property type="entry name" value="ligand-binding face of the semaphorins, domain 2"/>
    <property type="match status" value="1"/>
</dbReference>
<dbReference type="Gene3D" id="2.130.10.10">
    <property type="entry name" value="YVTN repeat-like/Quinoprotein amine dehydrogenase"/>
    <property type="match status" value="1"/>
</dbReference>
<dbReference type="InterPro" id="IPR016201">
    <property type="entry name" value="PSI"/>
</dbReference>
<dbReference type="InterPro" id="IPR001627">
    <property type="entry name" value="Semap_dom"/>
</dbReference>
<dbReference type="InterPro" id="IPR036352">
    <property type="entry name" value="Semap_dom_sf"/>
</dbReference>
<dbReference type="InterPro" id="IPR027231">
    <property type="entry name" value="Semaphorin"/>
</dbReference>
<dbReference type="InterPro" id="IPR015513">
    <property type="entry name" value="Semaphorin_3E_Sema"/>
</dbReference>
<dbReference type="InterPro" id="IPR015943">
    <property type="entry name" value="WD40/YVTN_repeat-like_dom_sf"/>
</dbReference>
<dbReference type="PANTHER" id="PTHR11036">
    <property type="entry name" value="SEMAPHORIN"/>
    <property type="match status" value="1"/>
</dbReference>
<dbReference type="PANTHER" id="PTHR11036:SF22">
    <property type="entry name" value="SEMAPHORIN-3E"/>
    <property type="match status" value="1"/>
</dbReference>
<dbReference type="Pfam" id="PF01403">
    <property type="entry name" value="Sema"/>
    <property type="match status" value="1"/>
</dbReference>
<dbReference type="SMART" id="SM00423">
    <property type="entry name" value="PSI"/>
    <property type="match status" value="1"/>
</dbReference>
<dbReference type="SMART" id="SM00630">
    <property type="entry name" value="Sema"/>
    <property type="match status" value="1"/>
</dbReference>
<dbReference type="SUPFAM" id="SSF103575">
    <property type="entry name" value="Plexin repeat"/>
    <property type="match status" value="1"/>
</dbReference>
<dbReference type="SUPFAM" id="SSF101912">
    <property type="entry name" value="Sema domain"/>
    <property type="match status" value="1"/>
</dbReference>
<dbReference type="PROSITE" id="PS51004">
    <property type="entry name" value="SEMA"/>
    <property type="match status" value="1"/>
</dbReference>
<evidence type="ECO:0000250" key="1"/>
<evidence type="ECO:0000255" key="2"/>
<evidence type="ECO:0000255" key="3">
    <source>
        <dbReference type="PROSITE-ProRule" id="PRU00352"/>
    </source>
</evidence>
<evidence type="ECO:0000256" key="4">
    <source>
        <dbReference type="SAM" id="MobiDB-lite"/>
    </source>
</evidence>
<evidence type="ECO:0000305" key="5"/>
<organism>
    <name type="scientific">Gallus gallus</name>
    <name type="common">Chicken</name>
    <dbReference type="NCBI Taxonomy" id="9031"/>
    <lineage>
        <taxon>Eukaryota</taxon>
        <taxon>Metazoa</taxon>
        <taxon>Chordata</taxon>
        <taxon>Craniata</taxon>
        <taxon>Vertebrata</taxon>
        <taxon>Euteleostomi</taxon>
        <taxon>Archelosauria</taxon>
        <taxon>Archosauria</taxon>
        <taxon>Dinosauria</taxon>
        <taxon>Saurischia</taxon>
        <taxon>Theropoda</taxon>
        <taxon>Coelurosauria</taxon>
        <taxon>Aves</taxon>
        <taxon>Neognathae</taxon>
        <taxon>Galloanserae</taxon>
        <taxon>Galliformes</taxon>
        <taxon>Phasianidae</taxon>
        <taxon>Phasianinae</taxon>
        <taxon>Gallus</taxon>
    </lineage>
</organism>
<comment type="function">
    <text evidence="1">Plays an important role in signaling via the cell surface receptor PLXND1. Mediates reorganization of the actin cytoskeleton, leading to the retraction of cell projections. Promotes focal adhesion disassembly and inhibits adhesion of endothelial cells to the extracellular matrix. Regulates angiogenesis. Can down-regulate sprouting angiogenesis. Required for normal vascular patterning during embryogenesis. Induces the collapse and paralysis of neuronal growth cones. Plays an important role in ensuring the specificity of synapse formation (By similarity).</text>
</comment>
<comment type="subcellular location">
    <subcellularLocation>
        <location>Secreted</location>
    </subcellularLocation>
</comment>
<comment type="tissue specificity">
    <text>Collapsin-1, -2, -3, and -5 bind to overlapping but distinct axon tracts.</text>
</comment>
<comment type="domain">
    <text>Strong binding to neuropilin is mediated by the carboxy third of the protein.</text>
</comment>
<comment type="similarity">
    <text evidence="5">Belongs to the semaphorin family.</text>
</comment>
<proteinExistence type="evidence at transcript level"/>
<gene>
    <name type="primary">SEMA3E</name>
    <name type="synonym">COLL5</name>
</gene>
<keyword id="KW-0037">Angiogenesis</keyword>
<keyword id="KW-0217">Developmental protein</keyword>
<keyword id="KW-0221">Differentiation</keyword>
<keyword id="KW-1015">Disulfide bond</keyword>
<keyword id="KW-0325">Glycoprotein</keyword>
<keyword id="KW-0393">Immunoglobulin domain</keyword>
<keyword id="KW-0524">Neurogenesis</keyword>
<keyword id="KW-1185">Reference proteome</keyword>
<keyword id="KW-0964">Secreted</keyword>
<keyword id="KW-0732">Signal</keyword>
<name>SEM3E_CHICK</name>
<sequence length="785" mass="90979">MLGRMASAQDLLILALCGLLLELPAGYHATDTRQPRLRLSHKELWDLNRTSVFHSPFGYLGLHIMLLDEYQERLFVGGRDLLYSLSLDRISNNYREIHWPSTPLQAEECIIKGRDADECANYVRVLHRYNRTHLLACGTGAFDPVCTFIRVGHPSEDHLFQLESHKFERGRGRCPFDPTSSFTSILIGGELFTGLYSDYWGRDAAVFRTMNRMAHLRTEPDSEHLLKEPKFVGSYMIPDNEDHDDNKVYLFFTEKALEAETSTHAIYTRVGRVCVNDMGGQRIVVNKWSTFLKTRLVCSVPGRNGIDTHFDELEDVFLLQTRDNKNPVIFGLFSTTSNIFRGYAICVYHMAIVRAAFNGPYAHKEGPEYYWALYEGKVPYPRPGSCASKVNGGLYTTTKDYPDEAVHFARSHPLMYQPIKPVHKRPILVKTDGKYNLKQIAVDRVEAEDGQYDVLFIGTDNGIVLKVITIYNQETESMEEVILEELQVFKVPIPILSMEISSKRQQLYIGTESVIAQVKFHQCDMYGTACADCCLARDPYCAWDGISCSRYYPTGMQAKRRFRRQDVRHGNAAQQCFGQQFIGEVLEKTEERLVYGIEYNSTLLEYTPRTLQAKVNWFVQRAHETKKEEVKTDERIIKMDLGLLFLKLHRLDAGTYFCQTVEHSIVHTVRKITLEIVEEERVDEMFSKDYEEEISHKMPCPMQSNIPQVSKPWYKEFLQLIGYSNFQRVEEYCEKVWCTDKKRKKLKMSPSKWKYANPQEKRQDQEKKARIRPEHYRLPRNIADS</sequence>